<reference key="1">
    <citation type="journal article" date="1991" name="J. Virol.">
        <title>Analysis of the herpes simplex virus type 1 promoter controlling the expression of UL38, a true late gene involved in capsid assembly.</title>
        <authorList>
            <person name="Flanagan W.M."/>
            <person name="Papavassiliou A.G."/>
            <person name="Rice M."/>
            <person name="Hecht L.B."/>
            <person name="Silverstein S."/>
            <person name="Wagner E.K."/>
        </authorList>
    </citation>
    <scope>NUCLEOTIDE SEQUENCE [GENOMIC DNA]</scope>
</reference>
<keyword id="KW-0167">Capsid protein</keyword>
<keyword id="KW-1048">Host nucleus</keyword>
<keyword id="KW-0946">Virion</keyword>
<organism>
    <name type="scientific">Human herpesvirus 1 (strain KOS)</name>
    <name type="common">HHV-1</name>
    <name type="synonym">Human herpes simplex virus 1</name>
    <dbReference type="NCBI Taxonomy" id="10306"/>
    <lineage>
        <taxon>Viruses</taxon>
        <taxon>Duplodnaviria</taxon>
        <taxon>Heunggongvirae</taxon>
        <taxon>Peploviricota</taxon>
        <taxon>Herviviricetes</taxon>
        <taxon>Herpesvirales</taxon>
        <taxon>Orthoherpesviridae</taxon>
        <taxon>Alphaherpesvirinae</taxon>
        <taxon>Simplexvirus</taxon>
        <taxon>Simplexvirus humanalpha1</taxon>
        <taxon>Human herpesvirus 1</taxon>
    </lineage>
</organism>
<proteinExistence type="inferred from homology"/>
<dbReference type="EMBL" id="M57646">
    <property type="protein sequence ID" value="AAA45830.1"/>
    <property type="molecule type" value="Genomic_DNA"/>
</dbReference>
<dbReference type="GO" id="GO:0042025">
    <property type="term" value="C:host cell nucleus"/>
    <property type="evidence" value="ECO:0007669"/>
    <property type="project" value="UniProtKB-SubCell"/>
</dbReference>
<dbReference type="GO" id="GO:0019028">
    <property type="term" value="C:viral capsid"/>
    <property type="evidence" value="ECO:0007669"/>
    <property type="project" value="UniProtKB-KW"/>
</dbReference>
<organismHost>
    <name type="scientific">Homo sapiens</name>
    <name type="common">Human</name>
    <dbReference type="NCBI Taxonomy" id="9606"/>
</organismHost>
<evidence type="ECO:0000250" key="1"/>
<evidence type="ECO:0000305" key="2"/>
<name>VP19_HHV1K</name>
<feature type="chain" id="PRO_0000115714" description="Triplex capsid protein VP19C">
    <location>
        <begin position="1"/>
        <end position="6" status="greater than"/>
    </location>
</feature>
<feature type="non-terminal residue">
    <location>
        <position position="6"/>
    </location>
</feature>
<protein>
    <recommendedName>
        <fullName>Triplex capsid protein VP19C</fullName>
    </recommendedName>
    <alternativeName>
        <fullName>Virion protein UL38</fullName>
    </alternativeName>
</protein>
<sequence>MKTNPL</sequence>
<gene>
    <name type="primary">UL38</name>
</gene>
<comment type="function">
    <text evidence="1">Structural component of the T=16 icosahedral capsid. The capsid is composed of pentamers and hexamers of VP5, which are linked together by heterotrimers called triplex. These triplex are formed by a single molecule of VP19C and two copies of VP23 which bridge major capsid protein VP5 multimers together. Triplexes occupy the local threeflod positions between capsid hexamers and pentamers (By similarity).</text>
</comment>
<comment type="subunit">
    <text evidence="1">Interacts with VP23, VP5 and UL25.</text>
</comment>
<comment type="subcellular location">
    <subcellularLocation>
        <location>Virion</location>
    </subcellularLocation>
    <subcellularLocation>
        <location evidence="1">Host nucleus</location>
    </subcellularLocation>
</comment>
<comment type="similarity">
    <text evidence="2">Belongs to the herpesviridae VP19C family.</text>
</comment>
<accession>P23210</accession>